<feature type="signal peptide" evidence="2">
    <location>
        <begin position="1"/>
        <end position="21"/>
    </location>
</feature>
<feature type="chain" id="PRO_0000417434" description="Potassium channel toxin alpha-KTx BmKcug1a">
    <location>
        <begin position="22"/>
        <end position="58"/>
    </location>
</feature>
<feature type="site" description="Basic residue of the functional dyad" evidence="1">
    <location>
        <position position="48"/>
    </location>
</feature>
<feature type="site" description="Aromatic residue of the functional dyad" evidence="1">
    <location>
        <position position="57"/>
    </location>
</feature>
<feature type="modified residue" description="Pyrrolidone carboxylic acid" evidence="2">
    <location>
        <position position="22"/>
    </location>
</feature>
<feature type="disulfide bond" evidence="2">
    <location>
        <begin position="28"/>
        <end position="49"/>
    </location>
</feature>
<feature type="disulfide bond" evidence="2">
    <location>
        <begin position="34"/>
        <end position="54"/>
    </location>
</feature>
<feature type="disulfide bond" evidence="2">
    <location>
        <begin position="38"/>
        <end position="56"/>
    </location>
</feature>
<protein>
    <recommendedName>
        <fullName evidence="3">Potassium channel toxin alpha-KTx BmKcug1a</fullName>
        <shortName evidence="6 7">Kcug1a</shortName>
    </recommendedName>
</protein>
<evidence type="ECO:0000250" key="1"/>
<evidence type="ECO:0000250" key="2">
    <source>
        <dbReference type="UniProtKB" id="Q9NII5"/>
    </source>
</evidence>
<evidence type="ECO:0000303" key="3">
    <source>
    </source>
</evidence>
<evidence type="ECO:0000305" key="4"/>
<evidence type="ECO:0000305" key="5">
    <source>
    </source>
</evidence>
<evidence type="ECO:0000312" key="6">
    <source>
        <dbReference type="EMBL" id="AEX92699.1"/>
    </source>
</evidence>
<evidence type="ECO:0000312" key="7">
    <source>
        <dbReference type="EMBL" id="AEX92702.1"/>
    </source>
</evidence>
<name>KAX1X_OLIMR</name>
<keyword id="KW-1221">Calcium-activated potassium channel impairing toxin</keyword>
<keyword id="KW-1015">Disulfide bond</keyword>
<keyword id="KW-0872">Ion channel impairing toxin</keyword>
<keyword id="KW-0528">Neurotoxin</keyword>
<keyword id="KW-0632">Potassium channel impairing toxin</keyword>
<keyword id="KW-0873">Pyrrolidone carboxylic acid</keyword>
<keyword id="KW-0964">Secreted</keyword>
<keyword id="KW-0732">Signal</keyword>
<keyword id="KW-0800">Toxin</keyword>
<keyword id="KW-1220">Voltage-gated potassium channel impairing toxin</keyword>
<reference key="1">
    <citation type="journal article" date="2012" name="Peptides">
        <title>Identification and molecular characterization of three new K(+)-channel specific toxins from the Chinese scorpion Mesobuthus martensii Karsch revealing intronic number polymorphism and alternative splicing in duplicated genes.</title>
        <authorList>
            <person name="Zeng X.C."/>
            <person name="Zhang L."/>
            <person name="Nie Y."/>
            <person name="Luo X."/>
        </authorList>
    </citation>
    <scope>NUCLEOTIDE SEQUENCE [GENOMIC DNA / MRNA]</scope>
    <source>
        <tissue>Venom gland</tissue>
    </source>
</reference>
<dbReference type="EMBL" id="JQ023128">
    <property type="protein sequence ID" value="AEX92699.1"/>
    <property type="molecule type" value="Genomic_DNA"/>
</dbReference>
<dbReference type="EMBL" id="JQ074234">
    <property type="protein sequence ID" value="AEX92702.1"/>
    <property type="molecule type" value="mRNA"/>
</dbReference>
<dbReference type="BMRB" id="H2ER22"/>
<dbReference type="SMR" id="H2ER22"/>
<dbReference type="GO" id="GO:0005576">
    <property type="term" value="C:extracellular region"/>
    <property type="evidence" value="ECO:0007669"/>
    <property type="project" value="UniProtKB-SubCell"/>
</dbReference>
<dbReference type="GO" id="GO:0008200">
    <property type="term" value="F:ion channel inhibitor activity"/>
    <property type="evidence" value="ECO:0007669"/>
    <property type="project" value="InterPro"/>
</dbReference>
<dbReference type="GO" id="GO:0015459">
    <property type="term" value="F:potassium channel regulator activity"/>
    <property type="evidence" value="ECO:0007669"/>
    <property type="project" value="UniProtKB-KW"/>
</dbReference>
<dbReference type="GO" id="GO:0090729">
    <property type="term" value="F:toxin activity"/>
    <property type="evidence" value="ECO:0007669"/>
    <property type="project" value="UniProtKB-KW"/>
</dbReference>
<dbReference type="Gene3D" id="3.30.30.10">
    <property type="entry name" value="Knottin, scorpion toxin-like"/>
    <property type="match status" value="1"/>
</dbReference>
<dbReference type="InterPro" id="IPR036574">
    <property type="entry name" value="Scorpion_toxin-like_sf"/>
</dbReference>
<dbReference type="InterPro" id="IPR001947">
    <property type="entry name" value="Scorpion_toxinS_K_inh"/>
</dbReference>
<dbReference type="Pfam" id="PF00451">
    <property type="entry name" value="Toxin_2"/>
    <property type="match status" value="1"/>
</dbReference>
<dbReference type="PRINTS" id="PR00286">
    <property type="entry name" value="CHARYBDTOXIN"/>
</dbReference>
<dbReference type="SUPFAM" id="SSF57095">
    <property type="entry name" value="Scorpion toxin-like"/>
    <property type="match status" value="1"/>
</dbReference>
<dbReference type="PROSITE" id="PS01138">
    <property type="entry name" value="SCORP_SHORT_TOXIN"/>
    <property type="match status" value="1"/>
</dbReference>
<accession>H2ER22</accession>
<proteinExistence type="inferred from homology"/>
<comment type="function">
    <text evidence="2">Potent blocker of both large-conductance calcium-activated potassium channels (KCa1.1/KCNMA1) and voltage-gated potassium channels (Kv1.3/KCNA3 and ERG1/Kv11.1/KCNH2).</text>
</comment>
<comment type="subcellular location">
    <subcellularLocation>
        <location evidence="2">Secreted</location>
    </subcellularLocation>
</comment>
<comment type="tissue specificity">
    <text evidence="5">Expressed by the venom gland.</text>
</comment>
<comment type="domain">
    <text evidence="2">Has the structural arrangement of an alpha-helix connected to a beta-sheet by disulfide bonds (CSalpha/beta).</text>
</comment>
<comment type="similarity">
    <text evidence="4">Belongs to the short scorpion toxin superfamily. Potassium channel inhibitor family. Alpha-KTx 01 subfamily.</text>
</comment>
<sequence length="58" mass="6508">MKISFLLLLAIVICSIGWTEAQFTNVSCSASSQCWPVCEKLFGTYRGKCMNSKCRCYS</sequence>
<organism>
    <name type="scientific">Olivierus martensii</name>
    <name type="common">Manchurian scorpion</name>
    <name type="synonym">Mesobuthus martensii</name>
    <dbReference type="NCBI Taxonomy" id="34649"/>
    <lineage>
        <taxon>Eukaryota</taxon>
        <taxon>Metazoa</taxon>
        <taxon>Ecdysozoa</taxon>
        <taxon>Arthropoda</taxon>
        <taxon>Chelicerata</taxon>
        <taxon>Arachnida</taxon>
        <taxon>Scorpiones</taxon>
        <taxon>Buthida</taxon>
        <taxon>Buthoidea</taxon>
        <taxon>Buthidae</taxon>
        <taxon>Olivierus</taxon>
    </lineage>
</organism>